<reference key="1">
    <citation type="submission" date="2008-01" db="EMBL/GenBank/DDBJ databases">
        <title>Cloning and expression of giant panda interleukin 15.</title>
        <authorList>
            <person name="Xu Q."/>
            <person name="Zhu M."/>
        </authorList>
    </citation>
    <scope>NUCLEOTIDE SEQUENCE [MRNA]</scope>
</reference>
<protein>
    <recommendedName>
        <fullName>Interleukin-15</fullName>
        <shortName>IL-15</shortName>
    </recommendedName>
</protein>
<gene>
    <name type="primary">IL15</name>
</gene>
<comment type="function">
    <text evidence="2 3">Cytokine that plays a major role in the development of inflammatory and protective immune responses to microbial invaders and parasites by modulating immune cells of both the innate and adaptive immune systems. Stimulates the proliferation of natural killer cells, T-cells and B-cells and promotes the secretion of several cytokines. In monocytes, induces the production of IL8 and monocyte chemotactic protein 1/CCL2, two chemokines that attract neutrophils and monocytes respectively to sites of infection. Unlike most cytokines, which are secreted in soluble form, IL15 is expressed in association with its high affinity IL15RA on the surface of IL15-producing cells and delivers signals to target cells that express IL2RB and IL2RG receptor subunits. Binding to its receptor triggers the phosphorylation of JAK1 and JAK3 and the recruitment and subsequent phosphorylation of signal transducer and activator of transcription-3/STAT3 and STAT5 (By similarity). In mast cells, induces the rapid tyrosine phosphorylation of STAT6 and thereby controls mast cell survival and release of cytokines such as IL4 (By similarity).</text>
</comment>
<comment type="subcellular location">
    <subcellularLocation>
        <location evidence="1">Secreted</location>
    </subcellularLocation>
</comment>
<comment type="similarity">
    <text evidence="5">Belongs to the IL-15/IL-21 family.</text>
</comment>
<keyword id="KW-0202">Cytokine</keyword>
<keyword id="KW-1015">Disulfide bond</keyword>
<keyword id="KW-0325">Glycoprotein</keyword>
<keyword id="KW-1185">Reference proteome</keyword>
<keyword id="KW-0964">Secreted</keyword>
<keyword id="KW-0732">Signal</keyword>
<evidence type="ECO:0000250" key="1"/>
<evidence type="ECO:0000250" key="2">
    <source>
        <dbReference type="UniProtKB" id="P40933"/>
    </source>
</evidence>
<evidence type="ECO:0000250" key="3">
    <source>
        <dbReference type="UniProtKB" id="P48346"/>
    </source>
</evidence>
<evidence type="ECO:0000255" key="4"/>
<evidence type="ECO:0000305" key="5"/>
<name>IL15_AILME</name>
<dbReference type="EMBL" id="EU375450">
    <property type="protein sequence ID" value="ABZ05757.1"/>
    <property type="molecule type" value="mRNA"/>
</dbReference>
<dbReference type="RefSeq" id="NP_001291844.1">
    <property type="nucleotide sequence ID" value="NM_001304915.1"/>
</dbReference>
<dbReference type="SMR" id="B0ZE70"/>
<dbReference type="STRING" id="9646.ENSAMEP00000008470"/>
<dbReference type="GlyCosmos" id="B0ZE70">
    <property type="glycosylation" value="1 site, No reported glycans"/>
</dbReference>
<dbReference type="GeneID" id="100484790"/>
<dbReference type="KEGG" id="aml:100484790"/>
<dbReference type="CTD" id="3600"/>
<dbReference type="eggNOG" id="ENOG502SCMF">
    <property type="taxonomic scope" value="Eukaryota"/>
</dbReference>
<dbReference type="InParanoid" id="B0ZE70"/>
<dbReference type="OrthoDB" id="8905762at2759"/>
<dbReference type="Proteomes" id="UP000008912">
    <property type="component" value="Unassembled WGS sequence"/>
</dbReference>
<dbReference type="GO" id="GO:0005615">
    <property type="term" value="C:extracellular space"/>
    <property type="evidence" value="ECO:0007669"/>
    <property type="project" value="UniProtKB-KW"/>
</dbReference>
<dbReference type="GO" id="GO:0005125">
    <property type="term" value="F:cytokine activity"/>
    <property type="evidence" value="ECO:0007669"/>
    <property type="project" value="UniProtKB-KW"/>
</dbReference>
<dbReference type="GO" id="GO:0005126">
    <property type="term" value="F:cytokine receptor binding"/>
    <property type="evidence" value="ECO:0007669"/>
    <property type="project" value="InterPro"/>
</dbReference>
<dbReference type="GO" id="GO:0006955">
    <property type="term" value="P:immune response"/>
    <property type="evidence" value="ECO:0007669"/>
    <property type="project" value="InterPro"/>
</dbReference>
<dbReference type="GO" id="GO:0035723">
    <property type="term" value="P:interleukin-15-mediated signaling pathway"/>
    <property type="evidence" value="ECO:0000250"/>
    <property type="project" value="UniProtKB"/>
</dbReference>
<dbReference type="GO" id="GO:0042119">
    <property type="term" value="P:neutrophil activation"/>
    <property type="evidence" value="ECO:0000250"/>
    <property type="project" value="UniProtKB"/>
</dbReference>
<dbReference type="GO" id="GO:0001819">
    <property type="term" value="P:positive regulation of cytokine production"/>
    <property type="evidence" value="ECO:0007669"/>
    <property type="project" value="TreeGrafter"/>
</dbReference>
<dbReference type="GO" id="GO:0050778">
    <property type="term" value="P:positive regulation of immune response"/>
    <property type="evidence" value="ECO:0007669"/>
    <property type="project" value="TreeGrafter"/>
</dbReference>
<dbReference type="GO" id="GO:0050731">
    <property type="term" value="P:positive regulation of peptidyl-tyrosine phosphorylation"/>
    <property type="evidence" value="ECO:0000250"/>
    <property type="project" value="UniProtKB"/>
</dbReference>
<dbReference type="GO" id="GO:0050766">
    <property type="term" value="P:positive regulation of phagocytosis"/>
    <property type="evidence" value="ECO:0000250"/>
    <property type="project" value="UniProtKB"/>
</dbReference>
<dbReference type="GO" id="GO:0042102">
    <property type="term" value="P:positive regulation of T cell proliferation"/>
    <property type="evidence" value="ECO:0007669"/>
    <property type="project" value="TreeGrafter"/>
</dbReference>
<dbReference type="FunFam" id="1.20.1250.70:FF:000001">
    <property type="entry name" value="Interleukin"/>
    <property type="match status" value="1"/>
</dbReference>
<dbReference type="Gene3D" id="1.20.1250.70">
    <property type="entry name" value="Interleukin-15/Interleukin-21"/>
    <property type="match status" value="1"/>
</dbReference>
<dbReference type="InterPro" id="IPR009079">
    <property type="entry name" value="4_helix_cytokine-like_core"/>
</dbReference>
<dbReference type="InterPro" id="IPR020439">
    <property type="entry name" value="IL-15"/>
</dbReference>
<dbReference type="InterPro" id="IPR003443">
    <property type="entry name" value="IL-15/IL-21_fam"/>
</dbReference>
<dbReference type="InterPro" id="IPR020466">
    <property type="entry name" value="IL-15_mml"/>
</dbReference>
<dbReference type="PANTHER" id="PTHR14356:SF3">
    <property type="entry name" value="INTERLEUKIN-15"/>
    <property type="match status" value="1"/>
</dbReference>
<dbReference type="PANTHER" id="PTHR14356">
    <property type="entry name" value="INTERLEUKIN-15-RELATED"/>
    <property type="match status" value="1"/>
</dbReference>
<dbReference type="Pfam" id="PF02372">
    <property type="entry name" value="IL15"/>
    <property type="match status" value="1"/>
</dbReference>
<dbReference type="PRINTS" id="PR01947">
    <property type="entry name" value="INTLKN15MAML"/>
</dbReference>
<dbReference type="PRINTS" id="PR01930">
    <property type="entry name" value="INTRLEUKIN15"/>
</dbReference>
<dbReference type="SUPFAM" id="SSF47266">
    <property type="entry name" value="4-helical cytokines"/>
    <property type="match status" value="1"/>
</dbReference>
<organism>
    <name type="scientific">Ailuropoda melanoleuca</name>
    <name type="common">Giant panda</name>
    <dbReference type="NCBI Taxonomy" id="9646"/>
    <lineage>
        <taxon>Eukaryota</taxon>
        <taxon>Metazoa</taxon>
        <taxon>Chordata</taxon>
        <taxon>Craniata</taxon>
        <taxon>Vertebrata</taxon>
        <taxon>Euteleostomi</taxon>
        <taxon>Mammalia</taxon>
        <taxon>Eutheria</taxon>
        <taxon>Laurasiatheria</taxon>
        <taxon>Carnivora</taxon>
        <taxon>Caniformia</taxon>
        <taxon>Ursidae</taxon>
        <taxon>Ailuropoda</taxon>
    </lineage>
</organism>
<feature type="signal peptide" evidence="4">
    <location>
        <begin position="1"/>
        <end position="29"/>
    </location>
</feature>
<feature type="propeptide" id="PRO_0000358325" evidence="4">
    <location>
        <begin position="30"/>
        <end position="48"/>
    </location>
</feature>
<feature type="chain" id="PRO_0000358326" description="Interleukin-15">
    <location>
        <begin position="49"/>
        <end position="162"/>
    </location>
</feature>
<feature type="glycosylation site" description="N-linked (GlcNAc...) asparagine" evidence="4">
    <location>
        <position position="108"/>
    </location>
</feature>
<feature type="disulfide bond" evidence="1">
    <location>
        <begin position="83"/>
        <end position="133"/>
    </location>
</feature>
<feature type="disulfide bond" evidence="1">
    <location>
        <begin position="90"/>
        <end position="136"/>
    </location>
</feature>
<accession>B0ZE70</accession>
<proteinExistence type="evidence at transcript level"/>
<sequence length="162" mass="18550">MRILKPHLRSTSIQCYLCLLLNSHFLTEAGIHVFILGCISAGLPKTEANWQFVIRDLEKIDNIIQSIHIDTTLYTESDAHPSCKVTAMKCFLLELRVISLEFKHHVLNETVENLIFLANDRLSSNGDITETGCKECEELEEKNIKEFLQSFVHIVQMFINTS</sequence>